<protein>
    <recommendedName>
        <fullName evidence="1">Phosphate acyltransferase</fullName>
        <ecNumber evidence="1">2.3.1.274</ecNumber>
    </recommendedName>
    <alternativeName>
        <fullName evidence="1">Acyl-ACP phosphotransacylase</fullName>
    </alternativeName>
    <alternativeName>
        <fullName evidence="1">Acyl-[acyl-carrier-protein]--phosphate acyltransferase</fullName>
    </alternativeName>
    <alternativeName>
        <fullName evidence="1">Phosphate-acyl-ACP acyltransferase</fullName>
    </alternativeName>
</protein>
<evidence type="ECO:0000255" key="1">
    <source>
        <dbReference type="HAMAP-Rule" id="MF_00019"/>
    </source>
</evidence>
<organism>
    <name type="scientific">Syntrophotalea carbinolica (strain DSM 2380 / NBRC 103641 / GraBd1)</name>
    <name type="common">Pelobacter carbinolicus</name>
    <dbReference type="NCBI Taxonomy" id="338963"/>
    <lineage>
        <taxon>Bacteria</taxon>
        <taxon>Pseudomonadati</taxon>
        <taxon>Thermodesulfobacteriota</taxon>
        <taxon>Desulfuromonadia</taxon>
        <taxon>Desulfuromonadales</taxon>
        <taxon>Syntrophotaleaceae</taxon>
        <taxon>Syntrophotalea</taxon>
    </lineage>
</organism>
<accession>Q3A4M6</accession>
<comment type="function">
    <text evidence="1">Catalyzes the reversible formation of acyl-phosphate (acyl-PO(4)) from acyl-[acyl-carrier-protein] (acyl-ACP). This enzyme utilizes acyl-ACP as fatty acyl donor, but not acyl-CoA.</text>
</comment>
<comment type="catalytic activity">
    <reaction evidence="1">
        <text>a fatty acyl-[ACP] + phosphate = an acyl phosphate + holo-[ACP]</text>
        <dbReference type="Rhea" id="RHEA:42292"/>
        <dbReference type="Rhea" id="RHEA-COMP:9685"/>
        <dbReference type="Rhea" id="RHEA-COMP:14125"/>
        <dbReference type="ChEBI" id="CHEBI:43474"/>
        <dbReference type="ChEBI" id="CHEBI:59918"/>
        <dbReference type="ChEBI" id="CHEBI:64479"/>
        <dbReference type="ChEBI" id="CHEBI:138651"/>
        <dbReference type="EC" id="2.3.1.274"/>
    </reaction>
</comment>
<comment type="pathway">
    <text evidence="1">Lipid metabolism; phospholipid metabolism.</text>
</comment>
<comment type="subunit">
    <text evidence="1">Homodimer. Probably interacts with PlsY.</text>
</comment>
<comment type="subcellular location">
    <subcellularLocation>
        <location evidence="1">Cytoplasm</location>
    </subcellularLocation>
    <text evidence="1">Associated with the membrane possibly through PlsY.</text>
</comment>
<comment type="similarity">
    <text evidence="1">Belongs to the PlsX family.</text>
</comment>
<gene>
    <name evidence="1" type="primary">plsX</name>
    <name type="ordered locus">Pcar_1435</name>
</gene>
<feature type="chain" id="PRO_0000329249" description="Phosphate acyltransferase">
    <location>
        <begin position="1"/>
        <end position="347"/>
    </location>
</feature>
<name>PLSX_SYNC1</name>
<dbReference type="EC" id="2.3.1.274" evidence="1"/>
<dbReference type="EMBL" id="CP000142">
    <property type="protein sequence ID" value="ABA88681.1"/>
    <property type="molecule type" value="Genomic_DNA"/>
</dbReference>
<dbReference type="RefSeq" id="WP_011341164.1">
    <property type="nucleotide sequence ID" value="NC_007498.2"/>
</dbReference>
<dbReference type="SMR" id="Q3A4M6"/>
<dbReference type="STRING" id="338963.Pcar_1435"/>
<dbReference type="KEGG" id="pca:Pcar_1435"/>
<dbReference type="eggNOG" id="COG0416">
    <property type="taxonomic scope" value="Bacteria"/>
</dbReference>
<dbReference type="HOGENOM" id="CLU_039379_1_1_7"/>
<dbReference type="OrthoDB" id="9806408at2"/>
<dbReference type="UniPathway" id="UPA00085"/>
<dbReference type="Proteomes" id="UP000002534">
    <property type="component" value="Chromosome"/>
</dbReference>
<dbReference type="GO" id="GO:0005737">
    <property type="term" value="C:cytoplasm"/>
    <property type="evidence" value="ECO:0007669"/>
    <property type="project" value="UniProtKB-SubCell"/>
</dbReference>
<dbReference type="GO" id="GO:0043811">
    <property type="term" value="F:phosphate:acyl-[acyl carrier protein] acyltransferase activity"/>
    <property type="evidence" value="ECO:0007669"/>
    <property type="project" value="UniProtKB-UniRule"/>
</dbReference>
<dbReference type="GO" id="GO:0006633">
    <property type="term" value="P:fatty acid biosynthetic process"/>
    <property type="evidence" value="ECO:0007669"/>
    <property type="project" value="UniProtKB-UniRule"/>
</dbReference>
<dbReference type="GO" id="GO:0008654">
    <property type="term" value="P:phospholipid biosynthetic process"/>
    <property type="evidence" value="ECO:0007669"/>
    <property type="project" value="UniProtKB-KW"/>
</dbReference>
<dbReference type="Gene3D" id="3.40.718.10">
    <property type="entry name" value="Isopropylmalate Dehydrogenase"/>
    <property type="match status" value="1"/>
</dbReference>
<dbReference type="HAMAP" id="MF_00019">
    <property type="entry name" value="PlsX"/>
    <property type="match status" value="1"/>
</dbReference>
<dbReference type="InterPro" id="IPR003664">
    <property type="entry name" value="FA_synthesis"/>
</dbReference>
<dbReference type="InterPro" id="IPR012281">
    <property type="entry name" value="Phospholipid_synth_PlsX-like"/>
</dbReference>
<dbReference type="NCBIfam" id="TIGR00182">
    <property type="entry name" value="plsX"/>
    <property type="match status" value="1"/>
</dbReference>
<dbReference type="PANTHER" id="PTHR30100">
    <property type="entry name" value="FATTY ACID/PHOSPHOLIPID SYNTHESIS PROTEIN PLSX"/>
    <property type="match status" value="1"/>
</dbReference>
<dbReference type="PANTHER" id="PTHR30100:SF1">
    <property type="entry name" value="PHOSPHATE ACYLTRANSFERASE"/>
    <property type="match status" value="1"/>
</dbReference>
<dbReference type="Pfam" id="PF02504">
    <property type="entry name" value="FA_synthesis"/>
    <property type="match status" value="1"/>
</dbReference>
<dbReference type="PIRSF" id="PIRSF002465">
    <property type="entry name" value="Phsphlp_syn_PlsX"/>
    <property type="match status" value="1"/>
</dbReference>
<dbReference type="SUPFAM" id="SSF53659">
    <property type="entry name" value="Isocitrate/Isopropylmalate dehydrogenase-like"/>
    <property type="match status" value="1"/>
</dbReference>
<sequence length="347" mass="37305">MNERIVVAVDAMGGDNAPEVEVEGAVAAARRWKIPIVLVGDQGRLDAVLSRYDLKGLDIAIRHATEVVGMHDSPSDAVRKKKDSSIRVAFDLLRGNEVQAVVSAGNSGATMAVGMFLCKRIPGIDRPAIATILPNKKSQTVLLDGGANVDCKPFHLSQFGTMGAVYAKFMLGKERPRVGVLSNGEEESKGNELAREAHKLLKQSSLNYIGFVEGRDIFSGDVDVVVCDGFVGNVVLKVSEGLSEAISDMLRGEIKQRLFAKLGYLLARPAFRAFKKKVDYAEYGGAPLLGIQGTGMICHGGSNARAIMNAIHMARESVSQRINDRLIAQLGMENPELSDDVVKRGAS</sequence>
<keyword id="KW-0963">Cytoplasm</keyword>
<keyword id="KW-0444">Lipid biosynthesis</keyword>
<keyword id="KW-0443">Lipid metabolism</keyword>
<keyword id="KW-0594">Phospholipid biosynthesis</keyword>
<keyword id="KW-1208">Phospholipid metabolism</keyword>
<keyword id="KW-1185">Reference proteome</keyword>
<keyword id="KW-0808">Transferase</keyword>
<reference key="1">
    <citation type="submission" date="2005-10" db="EMBL/GenBank/DDBJ databases">
        <title>Complete sequence of Pelobacter carbinolicus DSM 2380.</title>
        <authorList>
            <person name="Copeland A."/>
            <person name="Lucas S."/>
            <person name="Lapidus A."/>
            <person name="Barry K."/>
            <person name="Detter J.C."/>
            <person name="Glavina T."/>
            <person name="Hammon N."/>
            <person name="Israni S."/>
            <person name="Pitluck S."/>
            <person name="Chertkov O."/>
            <person name="Schmutz J."/>
            <person name="Larimer F."/>
            <person name="Land M."/>
            <person name="Kyrpides N."/>
            <person name="Ivanova N."/>
            <person name="Richardson P."/>
        </authorList>
    </citation>
    <scope>NUCLEOTIDE SEQUENCE [LARGE SCALE GENOMIC DNA]</scope>
    <source>
        <strain>DSM 2380 / NBRC 103641 / GraBd1</strain>
    </source>
</reference>
<proteinExistence type="inferred from homology"/>